<comment type="function">
    <text evidence="1">Catalyzes the conversion of (8S)-3',8-cyclo-7,8-dihydroguanosine 5'-triphosphate to cyclic pyranopterin monophosphate (cPMP).</text>
</comment>
<comment type="catalytic activity">
    <reaction evidence="1">
        <text>(8S)-3',8-cyclo-7,8-dihydroguanosine 5'-triphosphate = cyclic pyranopterin phosphate + diphosphate</text>
        <dbReference type="Rhea" id="RHEA:49580"/>
        <dbReference type="ChEBI" id="CHEBI:33019"/>
        <dbReference type="ChEBI" id="CHEBI:59648"/>
        <dbReference type="ChEBI" id="CHEBI:131766"/>
        <dbReference type="EC" id="4.6.1.17"/>
    </reaction>
</comment>
<comment type="pathway">
    <text evidence="1">Cofactor biosynthesis; molybdopterin biosynthesis.</text>
</comment>
<comment type="subunit">
    <text evidence="1">Homohexamer; trimer of dimers.</text>
</comment>
<comment type="similarity">
    <text evidence="1">Belongs to the MoaC family.</text>
</comment>
<gene>
    <name evidence="1" type="primary">moaC</name>
    <name type="ordered locus">SAHV_2258</name>
</gene>
<sequence>MTEFTHINQQGHAKMVDVSDKQITKRTAVAHSSITVNETIFKQISNNTNTKGNVLNTAQIAGIMAAKNTSTIIPMCHPLPLTGIDVHFSWDETNAPLYTLNIQTTVSTTGKTGVEMEALTAASATALTIYDMTKAVDKGMIIGETYLESKSGGKSGDFQRQSGQ</sequence>
<organism>
    <name type="scientific">Staphylococcus aureus (strain Mu3 / ATCC 700698)</name>
    <dbReference type="NCBI Taxonomy" id="418127"/>
    <lineage>
        <taxon>Bacteria</taxon>
        <taxon>Bacillati</taxon>
        <taxon>Bacillota</taxon>
        <taxon>Bacilli</taxon>
        <taxon>Bacillales</taxon>
        <taxon>Staphylococcaceae</taxon>
        <taxon>Staphylococcus</taxon>
    </lineage>
</organism>
<proteinExistence type="inferred from homology"/>
<feature type="chain" id="PRO_1000054149" description="Cyclic pyranopterin monophosphate synthase">
    <location>
        <begin position="1"/>
        <end position="164"/>
    </location>
</feature>
<feature type="active site" evidence="1">
    <location>
        <position position="131"/>
    </location>
</feature>
<feature type="binding site" evidence="1">
    <location>
        <begin position="75"/>
        <end position="77"/>
    </location>
    <ligand>
        <name>substrate</name>
    </ligand>
</feature>
<feature type="binding site" evidence="1">
    <location>
        <begin position="116"/>
        <end position="117"/>
    </location>
    <ligand>
        <name>substrate</name>
    </ligand>
</feature>
<protein>
    <recommendedName>
        <fullName evidence="1">Cyclic pyranopterin monophosphate synthase</fullName>
        <ecNumber evidence="1">4.6.1.17</ecNumber>
    </recommendedName>
    <alternativeName>
        <fullName evidence="1">Molybdenum cofactor biosynthesis protein C</fullName>
    </alternativeName>
</protein>
<keyword id="KW-0456">Lyase</keyword>
<keyword id="KW-0501">Molybdenum cofactor biosynthesis</keyword>
<dbReference type="EC" id="4.6.1.17" evidence="1"/>
<dbReference type="EMBL" id="AP009324">
    <property type="protein sequence ID" value="BAF79141.1"/>
    <property type="molecule type" value="Genomic_DNA"/>
</dbReference>
<dbReference type="RefSeq" id="WP_000134526.1">
    <property type="nucleotide sequence ID" value="NC_009782.1"/>
</dbReference>
<dbReference type="SMR" id="A7X5J9"/>
<dbReference type="KEGG" id="saw:SAHV_2258"/>
<dbReference type="HOGENOM" id="CLU_074693_1_1_9"/>
<dbReference type="UniPathway" id="UPA00344"/>
<dbReference type="GO" id="GO:0061799">
    <property type="term" value="F:cyclic pyranopterin monophosphate synthase activity"/>
    <property type="evidence" value="ECO:0007669"/>
    <property type="project" value="UniProtKB-UniRule"/>
</dbReference>
<dbReference type="GO" id="GO:0006777">
    <property type="term" value="P:Mo-molybdopterin cofactor biosynthetic process"/>
    <property type="evidence" value="ECO:0007669"/>
    <property type="project" value="UniProtKB-UniRule"/>
</dbReference>
<dbReference type="CDD" id="cd01420">
    <property type="entry name" value="MoaC_PE"/>
    <property type="match status" value="1"/>
</dbReference>
<dbReference type="Gene3D" id="3.30.70.640">
    <property type="entry name" value="Molybdopterin cofactor biosynthesis C (MoaC) domain"/>
    <property type="match status" value="1"/>
</dbReference>
<dbReference type="HAMAP" id="MF_01224_B">
    <property type="entry name" value="MoaC_B"/>
    <property type="match status" value="1"/>
</dbReference>
<dbReference type="InterPro" id="IPR023045">
    <property type="entry name" value="MoaC"/>
</dbReference>
<dbReference type="InterPro" id="IPR047594">
    <property type="entry name" value="MoaC_bact/euk"/>
</dbReference>
<dbReference type="InterPro" id="IPR036522">
    <property type="entry name" value="MoaC_sf"/>
</dbReference>
<dbReference type="InterPro" id="IPR050105">
    <property type="entry name" value="MoCo_biosynth_MoaA/MoaC"/>
</dbReference>
<dbReference type="InterPro" id="IPR002820">
    <property type="entry name" value="Mopterin_CF_biosynth-C_dom"/>
</dbReference>
<dbReference type="NCBIfam" id="TIGR00581">
    <property type="entry name" value="moaC"/>
    <property type="match status" value="1"/>
</dbReference>
<dbReference type="NCBIfam" id="NF006870">
    <property type="entry name" value="PRK09364.1"/>
    <property type="match status" value="1"/>
</dbReference>
<dbReference type="PANTHER" id="PTHR22960">
    <property type="entry name" value="MOLYBDOPTERIN COFACTOR SYNTHESIS PROTEIN A"/>
    <property type="match status" value="1"/>
</dbReference>
<dbReference type="Pfam" id="PF01967">
    <property type="entry name" value="MoaC"/>
    <property type="match status" value="1"/>
</dbReference>
<dbReference type="SUPFAM" id="SSF55040">
    <property type="entry name" value="Molybdenum cofactor biosynthesis protein C, MoaC"/>
    <property type="match status" value="1"/>
</dbReference>
<reference key="1">
    <citation type="journal article" date="2008" name="Antimicrob. Agents Chemother.">
        <title>Mutated response regulator graR is responsible for phenotypic conversion of Staphylococcus aureus from heterogeneous vancomycin-intermediate resistance to vancomycin-intermediate resistance.</title>
        <authorList>
            <person name="Neoh H.-M."/>
            <person name="Cui L."/>
            <person name="Yuzawa H."/>
            <person name="Takeuchi F."/>
            <person name="Matsuo M."/>
            <person name="Hiramatsu K."/>
        </authorList>
    </citation>
    <scope>NUCLEOTIDE SEQUENCE [LARGE SCALE GENOMIC DNA]</scope>
    <source>
        <strain>Mu3 / ATCC 700698</strain>
    </source>
</reference>
<evidence type="ECO:0000255" key="1">
    <source>
        <dbReference type="HAMAP-Rule" id="MF_01224"/>
    </source>
</evidence>
<accession>A7X5J9</accession>
<name>MOAC_STAA1</name>